<feature type="chain" id="PRO_0000380054" description="GTP-dependent dephospho-CoA kinase">
    <location>
        <begin position="1"/>
        <end position="188"/>
    </location>
</feature>
<feature type="binding site" evidence="1">
    <location>
        <position position="43"/>
    </location>
    <ligand>
        <name>GTP</name>
        <dbReference type="ChEBI" id="CHEBI:37565"/>
    </ligand>
</feature>
<feature type="binding site" evidence="1">
    <location>
        <position position="44"/>
    </location>
    <ligand>
        <name>GTP</name>
        <dbReference type="ChEBI" id="CHEBI:37565"/>
    </ligand>
</feature>
<feature type="binding site" evidence="1">
    <location>
        <position position="62"/>
    </location>
    <ligand>
        <name>GTP</name>
        <dbReference type="ChEBI" id="CHEBI:37565"/>
    </ligand>
</feature>
<feature type="binding site" evidence="1">
    <location>
        <position position="121"/>
    </location>
    <ligand>
        <name>GTP</name>
        <dbReference type="ChEBI" id="CHEBI:37565"/>
    </ligand>
</feature>
<feature type="binding site" evidence="1">
    <location>
        <position position="144"/>
    </location>
    <ligand>
        <name>GTP</name>
        <dbReference type="ChEBI" id="CHEBI:37565"/>
    </ligand>
</feature>
<organism>
    <name type="scientific">Methanococcoides burtonii (strain DSM 6242 / NBRC 107633 / OCM 468 / ACE-M)</name>
    <dbReference type="NCBI Taxonomy" id="259564"/>
    <lineage>
        <taxon>Archaea</taxon>
        <taxon>Methanobacteriati</taxon>
        <taxon>Methanobacteriota</taxon>
        <taxon>Stenosarchaea group</taxon>
        <taxon>Methanomicrobia</taxon>
        <taxon>Methanosarcinales</taxon>
        <taxon>Methanosarcinaceae</taxon>
        <taxon>Methanococcoides</taxon>
    </lineage>
</organism>
<reference key="1">
    <citation type="journal article" date="2009" name="ISME J.">
        <title>The genome sequence of the psychrophilic archaeon, Methanococcoides burtonii: the role of genome evolution in cold adaptation.</title>
        <authorList>
            <person name="Allen M.A."/>
            <person name="Lauro F.M."/>
            <person name="Williams T.J."/>
            <person name="Burg D."/>
            <person name="Siddiqui K.S."/>
            <person name="De Francisci D."/>
            <person name="Chong K.W."/>
            <person name="Pilak O."/>
            <person name="Chew H.H."/>
            <person name="De Maere M.Z."/>
            <person name="Ting L."/>
            <person name="Katrib M."/>
            <person name="Ng C."/>
            <person name="Sowers K.R."/>
            <person name="Galperin M.Y."/>
            <person name="Anderson I.J."/>
            <person name="Ivanova N."/>
            <person name="Dalin E."/>
            <person name="Martinez M."/>
            <person name="Lapidus A."/>
            <person name="Hauser L."/>
            <person name="Land M."/>
            <person name="Thomas T."/>
            <person name="Cavicchioli R."/>
        </authorList>
    </citation>
    <scope>NUCLEOTIDE SEQUENCE [LARGE SCALE GENOMIC DNA]</scope>
    <source>
        <strain>DSM 6242 / NBRC 107633 / OCM 468 / ACE-M</strain>
    </source>
</reference>
<proteinExistence type="inferred from homology"/>
<name>DPCKG_METBU</name>
<evidence type="ECO:0000255" key="1">
    <source>
        <dbReference type="HAMAP-Rule" id="MF_00590"/>
    </source>
</evidence>
<protein>
    <recommendedName>
        <fullName evidence="1">GTP-dependent dephospho-CoA kinase</fullName>
        <ecNumber evidence="1">2.7.1.237</ecNumber>
    </recommendedName>
    <alternativeName>
        <fullName evidence="1">Dephospho-coenzyme A kinase</fullName>
        <shortName evidence="1">DPCK</shortName>
    </alternativeName>
</protein>
<gene>
    <name type="ordered locus">Mbur_2282</name>
</gene>
<keyword id="KW-0173">Coenzyme A biosynthesis</keyword>
<keyword id="KW-0342">GTP-binding</keyword>
<keyword id="KW-0418">Kinase</keyword>
<keyword id="KW-0547">Nucleotide-binding</keyword>
<keyword id="KW-0808">Transferase</keyword>
<sequence>MPDSLRPLLRKPFGVLYTGIGSDAVKSLVKDLNNPTKLISVGDVTTFHLLDSNIIPDILIVDDRTKRAPASSQVVFGTKHKGFAEITVDNPPGVITEDLINVISDAIVSDKNVRIFVQGEEDLAALPAILMAPLNSVVLYGQPDEGVMLVRVTESLKAELKDLFDKILEKQDHKEQLLHNVRRKLNGY</sequence>
<dbReference type="EC" id="2.7.1.237" evidence="1"/>
<dbReference type="EMBL" id="CP000300">
    <property type="protein sequence ID" value="ABE53142.1"/>
    <property type="molecule type" value="Genomic_DNA"/>
</dbReference>
<dbReference type="SMR" id="Q12TT4"/>
<dbReference type="STRING" id="259564.Mbur_2282"/>
<dbReference type="KEGG" id="mbu:Mbur_2282"/>
<dbReference type="HOGENOM" id="CLU_120795_1_0_2"/>
<dbReference type="UniPathway" id="UPA00241"/>
<dbReference type="Proteomes" id="UP000001979">
    <property type="component" value="Chromosome"/>
</dbReference>
<dbReference type="GO" id="GO:0005525">
    <property type="term" value="F:GTP binding"/>
    <property type="evidence" value="ECO:0007669"/>
    <property type="project" value="UniProtKB-UniRule"/>
</dbReference>
<dbReference type="GO" id="GO:0016301">
    <property type="term" value="F:kinase activity"/>
    <property type="evidence" value="ECO:0007669"/>
    <property type="project" value="UniProtKB-UniRule"/>
</dbReference>
<dbReference type="GO" id="GO:0015937">
    <property type="term" value="P:coenzyme A biosynthetic process"/>
    <property type="evidence" value="ECO:0007669"/>
    <property type="project" value="UniProtKB-UniRule"/>
</dbReference>
<dbReference type="HAMAP" id="MF_00590">
    <property type="entry name" value="Dephospho_CoA_kinase_GTP_dep"/>
    <property type="match status" value="1"/>
</dbReference>
<dbReference type="InterPro" id="IPR007164">
    <property type="entry name" value="GTP-dep_dephospho-CoA_kin"/>
</dbReference>
<dbReference type="PANTHER" id="PTHR40732:SF1">
    <property type="entry name" value="GTP-DEPENDENT DEPHOSPHO-COA KINASE"/>
    <property type="match status" value="1"/>
</dbReference>
<dbReference type="PANTHER" id="PTHR40732">
    <property type="entry name" value="UPF0218 PROTEIN TK1697"/>
    <property type="match status" value="1"/>
</dbReference>
<dbReference type="Pfam" id="PF04019">
    <property type="entry name" value="DUF359"/>
    <property type="match status" value="1"/>
</dbReference>
<dbReference type="PIRSF" id="PIRSF006533">
    <property type="entry name" value="UCP006533"/>
    <property type="match status" value="1"/>
</dbReference>
<accession>Q12TT4</accession>
<comment type="function">
    <text evidence="1">Catalyzes the GTP-dependent phosphorylation of the 3'-hydroxyl group of dephosphocoenzyme A to form coenzyme A (CoA).</text>
</comment>
<comment type="catalytic activity">
    <reaction evidence="1">
        <text>3'-dephospho-CoA + GTP = GDP + CoA + H(+)</text>
        <dbReference type="Rhea" id="RHEA:61156"/>
        <dbReference type="ChEBI" id="CHEBI:15378"/>
        <dbReference type="ChEBI" id="CHEBI:37565"/>
        <dbReference type="ChEBI" id="CHEBI:57287"/>
        <dbReference type="ChEBI" id="CHEBI:57328"/>
        <dbReference type="ChEBI" id="CHEBI:58189"/>
        <dbReference type="EC" id="2.7.1.237"/>
    </reaction>
</comment>
<comment type="pathway">
    <text evidence="1">Cofactor biosynthesis; coenzyme A biosynthesis.</text>
</comment>
<comment type="similarity">
    <text evidence="1">Belongs to the GTP-dependent DPCK family.</text>
</comment>